<proteinExistence type="evidence at protein level"/>
<protein>
    <recommendedName>
        <fullName>Beta-microseminoprotein</fullName>
    </recommendedName>
    <alternativeName>
        <fullName>Prostate secreted seminal plasma protein</fullName>
    </alternativeName>
    <alternativeName>
        <fullName>Prostate secretory protein of 94 amino acids</fullName>
        <shortName>PSP-94</shortName>
        <shortName>PSP94</shortName>
    </alternativeName>
</protein>
<name>MSMB_RAT</name>
<reference key="1">
    <citation type="journal article" date="1996" name="Arch. Biochem. Biophys.">
        <title>Cloning of beta-microseminoprotein of the rat: a rapidly evolving mucosal surface protein.</title>
        <authorList>
            <person name="Fernlund P."/>
            <person name="Granberg L.B."/>
            <person name="Larsson I."/>
        </authorList>
    </citation>
    <scope>NUCLEOTIDE SEQUENCE [MRNA]</scope>
    <scope>PARTIAL PROTEIN SEQUENCE</scope>
    <source>
        <tissue>Prostate</tissue>
    </source>
</reference>
<accession>P97580</accession>
<organism>
    <name type="scientific">Rattus norvegicus</name>
    <name type="common">Rat</name>
    <dbReference type="NCBI Taxonomy" id="10116"/>
    <lineage>
        <taxon>Eukaryota</taxon>
        <taxon>Metazoa</taxon>
        <taxon>Chordata</taxon>
        <taxon>Craniata</taxon>
        <taxon>Vertebrata</taxon>
        <taxon>Euteleostomi</taxon>
        <taxon>Mammalia</taxon>
        <taxon>Eutheria</taxon>
        <taxon>Euarchontoglires</taxon>
        <taxon>Glires</taxon>
        <taxon>Rodentia</taxon>
        <taxon>Myomorpha</taxon>
        <taxon>Muroidea</taxon>
        <taxon>Muridae</taxon>
        <taxon>Murinae</taxon>
        <taxon>Rattus</taxon>
    </lineage>
</organism>
<evidence type="ECO:0000250" key="1"/>
<evidence type="ECO:0000250" key="2">
    <source>
        <dbReference type="UniProtKB" id="P08118"/>
    </source>
</evidence>
<evidence type="ECO:0000255" key="3"/>
<evidence type="ECO:0000305" key="4"/>
<dbReference type="EMBL" id="U65486">
    <property type="protein sequence ID" value="AAB19102.1"/>
    <property type="molecule type" value="mRNA"/>
</dbReference>
<dbReference type="RefSeq" id="NP_062061.1">
    <property type="nucleotide sequence ID" value="NM_019188.1"/>
</dbReference>
<dbReference type="RefSeq" id="XP_063131338.1">
    <property type="nucleotide sequence ID" value="XM_063275268.1"/>
</dbReference>
<dbReference type="SMR" id="P97580"/>
<dbReference type="FunCoup" id="P97580">
    <property type="interactions" value="6"/>
</dbReference>
<dbReference type="STRING" id="10116.ENSRNOP00000026772"/>
<dbReference type="PhosphoSitePlus" id="P97580"/>
<dbReference type="PaxDb" id="10116-ENSRNOP00000026772"/>
<dbReference type="Ensembl" id="ENSRNOT00000026772.6">
    <property type="protein sequence ID" value="ENSRNOP00000026772.4"/>
    <property type="gene ID" value="ENSRNOG00000039786.3"/>
</dbReference>
<dbReference type="GeneID" id="29311"/>
<dbReference type="KEGG" id="rno:29311"/>
<dbReference type="UCSC" id="RGD:3113">
    <property type="organism name" value="rat"/>
</dbReference>
<dbReference type="AGR" id="RGD:3113"/>
<dbReference type="CTD" id="4477"/>
<dbReference type="RGD" id="3113">
    <property type="gene designation" value="Msmb"/>
</dbReference>
<dbReference type="eggNOG" id="ENOG502SF48">
    <property type="taxonomic scope" value="Eukaryota"/>
</dbReference>
<dbReference type="GeneTree" id="ENSGT00940000154371"/>
<dbReference type="HOGENOM" id="CLU_144891_0_0_1"/>
<dbReference type="InParanoid" id="P97580"/>
<dbReference type="OMA" id="ETEIICC"/>
<dbReference type="OrthoDB" id="6076852at2759"/>
<dbReference type="PhylomeDB" id="P97580"/>
<dbReference type="TreeFam" id="TF338336"/>
<dbReference type="PRO" id="PR:P97580"/>
<dbReference type="Proteomes" id="UP000002494">
    <property type="component" value="Chromosome 16"/>
</dbReference>
<dbReference type="Bgee" id="ENSRNOG00000039786">
    <property type="expression patterns" value="Expressed in ovary and 1 other cell type or tissue"/>
</dbReference>
<dbReference type="GO" id="GO:0005576">
    <property type="term" value="C:extracellular region"/>
    <property type="evidence" value="ECO:0007669"/>
    <property type="project" value="UniProtKB-SubCell"/>
</dbReference>
<dbReference type="Gene3D" id="2.20.25.590">
    <property type="match status" value="1"/>
</dbReference>
<dbReference type="Gene3D" id="2.10.70.10">
    <property type="entry name" value="Complement Module, domain 1"/>
    <property type="match status" value="1"/>
</dbReference>
<dbReference type="InterPro" id="IPR008735">
    <property type="entry name" value="PSP94"/>
</dbReference>
<dbReference type="PANTHER" id="PTHR10500">
    <property type="entry name" value="BETA-MICROSEMINOPROTEIN"/>
    <property type="match status" value="1"/>
</dbReference>
<dbReference type="PANTHER" id="PTHR10500:SF8">
    <property type="entry name" value="BETA-MICROSEMINOPROTEIN"/>
    <property type="match status" value="1"/>
</dbReference>
<dbReference type="Pfam" id="PF05825">
    <property type="entry name" value="PSP94"/>
    <property type="match status" value="1"/>
</dbReference>
<gene>
    <name type="primary">Msmb</name>
    <name type="synonym">Psp94</name>
</gene>
<comment type="subunit">
    <text evidence="1">Homodimer; Interacts with PI16.</text>
</comment>
<comment type="subcellular location">
    <subcellularLocation>
        <location>Secreted</location>
    </subcellularLocation>
    <text>Sperm surface. Present in the secretions of the airways, the gastrointestinal and the urogenital tracts.</text>
</comment>
<comment type="similarity">
    <text evidence="4">Belongs to the beta-microseminoprotein family.</text>
</comment>
<keyword id="KW-0903">Direct protein sequencing</keyword>
<keyword id="KW-1015">Disulfide bond</keyword>
<keyword id="KW-1185">Reference proteome</keyword>
<keyword id="KW-0964">Secreted</keyword>
<keyword id="KW-0732">Signal</keyword>
<feature type="signal peptide" evidence="3">
    <location>
        <begin position="1"/>
        <end position="20"/>
    </location>
</feature>
<feature type="chain" id="PRO_0000019273" description="Beta-microseminoprotein">
    <location>
        <begin position="21"/>
        <end position="113"/>
    </location>
</feature>
<feature type="disulfide bond" evidence="2">
    <location>
        <begin position="22"/>
        <end position="69"/>
    </location>
</feature>
<feature type="disulfide bond" evidence="2">
    <location>
        <begin position="38"/>
        <end position="61"/>
    </location>
</feature>
<feature type="disulfide bond" evidence="2">
    <location>
        <begin position="56"/>
        <end position="92"/>
    </location>
</feature>
<feature type="disulfide bond" evidence="2">
    <location>
        <begin position="59"/>
        <end position="68"/>
    </location>
</feature>
<feature type="disulfide bond" evidence="2">
    <location>
        <begin position="83"/>
        <end position="106"/>
    </location>
</feature>
<sequence length="113" mass="12750">MKARLGSLLVLATLVTASNAACSIQRLKRLPNEKSDECTDVDGGKHVLNTYWQKNCEWCFCEKTAITCCTKTLIPVSYDKKRCQRQFHSENCTYSVVERTNPGKTCPVNGWTI</sequence>